<proteinExistence type="inferred from homology"/>
<keyword id="KW-0119">Carbohydrate metabolism</keyword>
<keyword id="KW-0320">Glycogen biosynthesis</keyword>
<keyword id="KW-0321">Glycogen metabolism</keyword>
<keyword id="KW-0328">Glycosyltransferase</keyword>
<keyword id="KW-1185">Reference proteome</keyword>
<keyword id="KW-0808">Transferase</keyword>
<evidence type="ECO:0000255" key="1">
    <source>
        <dbReference type="HAMAP-Rule" id="MF_00685"/>
    </source>
</evidence>
<accession>Q1AZ86</accession>
<comment type="function">
    <text evidence="1">Catalyzes the formation of the alpha-1,6-glucosidic linkages in glycogen by scission of a 1,4-alpha-linked oligosaccharide from growing alpha-1,4-glucan chains and the subsequent attachment of the oligosaccharide to the alpha-1,6 position.</text>
</comment>
<comment type="catalytic activity">
    <reaction evidence="1">
        <text>Transfers a segment of a (1-&gt;4)-alpha-D-glucan chain to a primary hydroxy group in a similar glucan chain.</text>
        <dbReference type="EC" id="2.4.1.18"/>
    </reaction>
</comment>
<comment type="pathway">
    <text evidence="1">Glycan biosynthesis; glycogen biosynthesis.</text>
</comment>
<comment type="subunit">
    <text evidence="1">Monomer.</text>
</comment>
<comment type="similarity">
    <text evidence="1">Belongs to the glycosyl hydrolase 13 family. GlgB subfamily.</text>
</comment>
<feature type="chain" id="PRO_0000260694" description="1,4-alpha-glucan branching enzyme GlgB">
    <location>
        <begin position="1"/>
        <end position="722"/>
    </location>
</feature>
<feature type="active site" description="Nucleophile" evidence="1">
    <location>
        <position position="401"/>
    </location>
</feature>
<feature type="active site" description="Proton donor" evidence="1">
    <location>
        <position position="454"/>
    </location>
</feature>
<dbReference type="EC" id="2.4.1.18" evidence="1"/>
<dbReference type="EMBL" id="CP000386">
    <property type="protein sequence ID" value="ABG03292.1"/>
    <property type="molecule type" value="Genomic_DNA"/>
</dbReference>
<dbReference type="RefSeq" id="WP_011563310.1">
    <property type="nucleotide sequence ID" value="NC_008148.1"/>
</dbReference>
<dbReference type="SMR" id="Q1AZ86"/>
<dbReference type="STRING" id="266117.Rxyl_0316"/>
<dbReference type="CAZy" id="CBM48">
    <property type="family name" value="Carbohydrate-Binding Module Family 48"/>
</dbReference>
<dbReference type="CAZy" id="GH13">
    <property type="family name" value="Glycoside Hydrolase Family 13"/>
</dbReference>
<dbReference type="KEGG" id="rxy:Rxyl_0316"/>
<dbReference type="eggNOG" id="COG0296">
    <property type="taxonomic scope" value="Bacteria"/>
</dbReference>
<dbReference type="HOGENOM" id="CLU_004245_3_2_11"/>
<dbReference type="OrthoDB" id="9800174at2"/>
<dbReference type="PhylomeDB" id="Q1AZ86"/>
<dbReference type="UniPathway" id="UPA00164"/>
<dbReference type="Proteomes" id="UP000006637">
    <property type="component" value="Chromosome"/>
</dbReference>
<dbReference type="GO" id="GO:0005829">
    <property type="term" value="C:cytosol"/>
    <property type="evidence" value="ECO:0007669"/>
    <property type="project" value="TreeGrafter"/>
</dbReference>
<dbReference type="GO" id="GO:0003844">
    <property type="term" value="F:1,4-alpha-glucan branching enzyme activity"/>
    <property type="evidence" value="ECO:0007669"/>
    <property type="project" value="UniProtKB-UniRule"/>
</dbReference>
<dbReference type="GO" id="GO:0043169">
    <property type="term" value="F:cation binding"/>
    <property type="evidence" value="ECO:0007669"/>
    <property type="project" value="InterPro"/>
</dbReference>
<dbReference type="GO" id="GO:0004553">
    <property type="term" value="F:hydrolase activity, hydrolyzing O-glycosyl compounds"/>
    <property type="evidence" value="ECO:0007669"/>
    <property type="project" value="InterPro"/>
</dbReference>
<dbReference type="GO" id="GO:0005978">
    <property type="term" value="P:glycogen biosynthetic process"/>
    <property type="evidence" value="ECO:0007669"/>
    <property type="project" value="UniProtKB-UniRule"/>
</dbReference>
<dbReference type="CDD" id="cd11322">
    <property type="entry name" value="AmyAc_Glg_BE"/>
    <property type="match status" value="1"/>
</dbReference>
<dbReference type="CDD" id="cd02855">
    <property type="entry name" value="E_set_GBE_prok_N"/>
    <property type="match status" value="1"/>
</dbReference>
<dbReference type="FunFam" id="2.60.40.10:FF:000169">
    <property type="entry name" value="1,4-alpha-glucan branching enzyme GlgB"/>
    <property type="match status" value="1"/>
</dbReference>
<dbReference type="FunFam" id="2.60.40.1180:FF:000002">
    <property type="entry name" value="1,4-alpha-glucan branching enzyme GlgB"/>
    <property type="match status" value="1"/>
</dbReference>
<dbReference type="FunFam" id="3.20.20.80:FF:000003">
    <property type="entry name" value="1,4-alpha-glucan branching enzyme GlgB"/>
    <property type="match status" value="1"/>
</dbReference>
<dbReference type="Gene3D" id="3.20.20.80">
    <property type="entry name" value="Glycosidases"/>
    <property type="match status" value="1"/>
</dbReference>
<dbReference type="Gene3D" id="2.60.40.1180">
    <property type="entry name" value="Golgi alpha-mannosidase II"/>
    <property type="match status" value="1"/>
</dbReference>
<dbReference type="Gene3D" id="2.60.40.10">
    <property type="entry name" value="Immunoglobulins"/>
    <property type="match status" value="1"/>
</dbReference>
<dbReference type="HAMAP" id="MF_00685">
    <property type="entry name" value="GlgB"/>
    <property type="match status" value="1"/>
</dbReference>
<dbReference type="InterPro" id="IPR006048">
    <property type="entry name" value="A-amylase/branching_C"/>
</dbReference>
<dbReference type="InterPro" id="IPR037439">
    <property type="entry name" value="Branching_enzy"/>
</dbReference>
<dbReference type="InterPro" id="IPR006407">
    <property type="entry name" value="GlgB"/>
</dbReference>
<dbReference type="InterPro" id="IPR054169">
    <property type="entry name" value="GlgB_N"/>
</dbReference>
<dbReference type="InterPro" id="IPR044143">
    <property type="entry name" value="GlgB_N_E_set_prok"/>
</dbReference>
<dbReference type="InterPro" id="IPR006047">
    <property type="entry name" value="Glyco_hydro_13_cat_dom"/>
</dbReference>
<dbReference type="InterPro" id="IPR004193">
    <property type="entry name" value="Glyco_hydro_13_N"/>
</dbReference>
<dbReference type="InterPro" id="IPR013780">
    <property type="entry name" value="Glyco_hydro_b"/>
</dbReference>
<dbReference type="InterPro" id="IPR017853">
    <property type="entry name" value="Glycoside_hydrolase_SF"/>
</dbReference>
<dbReference type="InterPro" id="IPR013783">
    <property type="entry name" value="Ig-like_fold"/>
</dbReference>
<dbReference type="InterPro" id="IPR014756">
    <property type="entry name" value="Ig_E-set"/>
</dbReference>
<dbReference type="NCBIfam" id="TIGR01515">
    <property type="entry name" value="branching_enzym"/>
    <property type="match status" value="1"/>
</dbReference>
<dbReference type="NCBIfam" id="NF003811">
    <property type="entry name" value="PRK05402.1"/>
    <property type="match status" value="1"/>
</dbReference>
<dbReference type="NCBIfam" id="NF008967">
    <property type="entry name" value="PRK12313.1"/>
    <property type="match status" value="1"/>
</dbReference>
<dbReference type="PANTHER" id="PTHR43651">
    <property type="entry name" value="1,4-ALPHA-GLUCAN-BRANCHING ENZYME"/>
    <property type="match status" value="1"/>
</dbReference>
<dbReference type="PANTHER" id="PTHR43651:SF3">
    <property type="entry name" value="1,4-ALPHA-GLUCAN-BRANCHING ENZYME"/>
    <property type="match status" value="1"/>
</dbReference>
<dbReference type="Pfam" id="PF00128">
    <property type="entry name" value="Alpha-amylase"/>
    <property type="match status" value="1"/>
</dbReference>
<dbReference type="Pfam" id="PF02806">
    <property type="entry name" value="Alpha-amylase_C"/>
    <property type="match status" value="1"/>
</dbReference>
<dbReference type="Pfam" id="PF02922">
    <property type="entry name" value="CBM_48"/>
    <property type="match status" value="1"/>
</dbReference>
<dbReference type="Pfam" id="PF22019">
    <property type="entry name" value="GlgB_N"/>
    <property type="match status" value="1"/>
</dbReference>
<dbReference type="PIRSF" id="PIRSF000463">
    <property type="entry name" value="GlgB"/>
    <property type="match status" value="1"/>
</dbReference>
<dbReference type="SMART" id="SM00642">
    <property type="entry name" value="Aamy"/>
    <property type="match status" value="1"/>
</dbReference>
<dbReference type="SUPFAM" id="SSF51445">
    <property type="entry name" value="(Trans)glycosidases"/>
    <property type="match status" value="1"/>
</dbReference>
<dbReference type="SUPFAM" id="SSF81296">
    <property type="entry name" value="E set domains"/>
    <property type="match status" value="1"/>
</dbReference>
<dbReference type="SUPFAM" id="SSF51011">
    <property type="entry name" value="Glycosyl hydrolase domain"/>
    <property type="match status" value="1"/>
</dbReference>
<reference key="1">
    <citation type="submission" date="2006-06" db="EMBL/GenBank/DDBJ databases">
        <title>Complete sequence of Rubrobacter xylanophilus DSM 9941.</title>
        <authorList>
            <consortium name="US DOE Joint Genome Institute"/>
            <person name="Copeland A."/>
            <person name="Lucas S."/>
            <person name="Lapidus A."/>
            <person name="Barry K."/>
            <person name="Detter J.C."/>
            <person name="Glavina del Rio T."/>
            <person name="Hammon N."/>
            <person name="Israni S."/>
            <person name="Dalin E."/>
            <person name="Tice H."/>
            <person name="Pitluck S."/>
            <person name="Munk A.C."/>
            <person name="Brettin T."/>
            <person name="Bruce D."/>
            <person name="Han C."/>
            <person name="Tapia R."/>
            <person name="Gilna P."/>
            <person name="Schmutz J."/>
            <person name="Larimer F."/>
            <person name="Land M."/>
            <person name="Hauser L."/>
            <person name="Kyrpides N."/>
            <person name="Lykidis A."/>
            <person name="da Costa M.S."/>
            <person name="Rainey F.A."/>
            <person name="Empadinhas N."/>
            <person name="Jolivet E."/>
            <person name="Battista J.R."/>
            <person name="Richardson P."/>
        </authorList>
    </citation>
    <scope>NUCLEOTIDE SEQUENCE [LARGE SCALE GENOMIC DNA]</scope>
    <source>
        <strain>DSM 9941 / JCM 11954 / NBRC 16129 / PRD-1</strain>
    </source>
</reference>
<sequence length="722" mass="81740">MRREEAIRAVVAGDHPDPFSFLGPHEEAGRRVVRTFLPGAARVRVLSAAGRPLGELERVHPEGFFSGPLSGNGRYRLRVLWEGGGEDELEDPYRFPPVLSDYDLYLFGEGNNHRIYRHLGAHPAEMDGVCGTAFAVWAPNARRVSVVGDFNLWDGRRHPMRNRNGVWEIFLPGVGPGALYKYEIKDAGGSLLPLKADPYGFFAEQYPGTASIVWDLSRHRWEDGEWMERRGSRNAPDAPMAIYEVHLGSWRRRPDGSHLTYRELAEELVPYVAGLGYTHVELLPPMEHPFGGSWGYQPVGLFAPTSRFGPPEDFKHLVDAFHRAGVGVIADWVPAHFPEDAHGLARFDGTHLYEHADPRKGRHPDWGTLIYNYGRNEVRNFLISNALFWLDEYHIDGLRVDAVASMLYLDYSRKEGEWVPNEHGGNENLEAIAFLRRMNEVVYGEAPGAFTVAEESTAWPMVSRPTYMGGLGFGYKWNMGWMHDTLQYMKEDPVHRRYHHDRITFGLLYAFNENFILPLSHDEVVHGKGSLLGRMPGDRWQRFANLRAYYGFMYGHPGKQLLFMGGEFAQEREWDSGSQLDWHLLEGGENRGVRDLVADLNALYRATPALHQVDFEPEGFEWVEGGDAEQSVVSFLRRARNPEDFVLVVSNFTPVVRHGYRVGVPASGPYAEVLNTDDPRYGGSGVANGELEAEEVPWHGRPFSLRLTLPPLATVFLRPRPV</sequence>
<protein>
    <recommendedName>
        <fullName evidence="1">1,4-alpha-glucan branching enzyme GlgB</fullName>
        <ecNumber evidence="1">2.4.1.18</ecNumber>
    </recommendedName>
    <alternativeName>
        <fullName evidence="1">1,4-alpha-D-glucan:1,4-alpha-D-glucan 6-glucosyl-transferase</fullName>
    </alternativeName>
    <alternativeName>
        <fullName evidence="1">Alpha-(1-&gt;4)-glucan branching enzyme</fullName>
    </alternativeName>
    <alternativeName>
        <fullName evidence="1">Glycogen branching enzyme</fullName>
        <shortName evidence="1">BE</shortName>
    </alternativeName>
</protein>
<name>GLGB_RUBXD</name>
<gene>
    <name evidence="1" type="primary">glgB</name>
    <name type="ordered locus">Rxyl_0316</name>
</gene>
<organism>
    <name type="scientific">Rubrobacter xylanophilus (strain DSM 9941 / JCM 11954 / NBRC 16129 / PRD-1)</name>
    <dbReference type="NCBI Taxonomy" id="266117"/>
    <lineage>
        <taxon>Bacteria</taxon>
        <taxon>Bacillati</taxon>
        <taxon>Actinomycetota</taxon>
        <taxon>Rubrobacteria</taxon>
        <taxon>Rubrobacterales</taxon>
        <taxon>Rubrobacteraceae</taxon>
        <taxon>Rubrobacter</taxon>
    </lineage>
</organism>